<organism>
    <name type="scientific">Vibrio cholerae serotype O1 (strain ATCC 39315 / El Tor Inaba N16961)</name>
    <dbReference type="NCBI Taxonomy" id="243277"/>
    <lineage>
        <taxon>Bacteria</taxon>
        <taxon>Pseudomonadati</taxon>
        <taxon>Pseudomonadota</taxon>
        <taxon>Gammaproteobacteria</taxon>
        <taxon>Vibrionales</taxon>
        <taxon>Vibrionaceae</taxon>
        <taxon>Vibrio</taxon>
    </lineage>
</organism>
<protein>
    <recommendedName>
        <fullName>Iron-regulated virulence regulatory protein IrgB</fullName>
    </recommendedName>
</protein>
<evidence type="ECO:0000250" key="1"/>
<evidence type="ECO:0000255" key="2">
    <source>
        <dbReference type="PROSITE-ProRule" id="PRU00253"/>
    </source>
</evidence>
<evidence type="ECO:0000305" key="3"/>
<reference key="1">
    <citation type="journal article" date="2000" name="Nature">
        <title>DNA sequence of both chromosomes of the cholera pathogen Vibrio cholerae.</title>
        <authorList>
            <person name="Heidelberg J.F."/>
            <person name="Eisen J.A."/>
            <person name="Nelson W.C."/>
            <person name="Clayton R.A."/>
            <person name="Gwinn M.L."/>
            <person name="Dodson R.J."/>
            <person name="Haft D.H."/>
            <person name="Hickey E.K."/>
            <person name="Peterson J.D."/>
            <person name="Umayam L.A."/>
            <person name="Gill S.R."/>
            <person name="Nelson K.E."/>
            <person name="Read T.D."/>
            <person name="Tettelin H."/>
            <person name="Richardson D.L."/>
            <person name="Ermolaeva M.D."/>
            <person name="Vamathevan J.J."/>
            <person name="Bass S."/>
            <person name="Qin H."/>
            <person name="Dragoi I."/>
            <person name="Sellers P."/>
            <person name="McDonald L.A."/>
            <person name="Utterback T.R."/>
            <person name="Fleischmann R.D."/>
            <person name="Nierman W.C."/>
            <person name="White O."/>
            <person name="Salzberg S.L."/>
            <person name="Smith H.O."/>
            <person name="Colwell R.R."/>
            <person name="Mekalanos J.J."/>
            <person name="Venter J.C."/>
            <person name="Fraser C.M."/>
        </authorList>
    </citation>
    <scope>NUCLEOTIDE SEQUENCE [LARGE SCALE GENOMIC DNA]</scope>
    <source>
        <strain>ATCC 39315 / El Tor Inaba N16961</strain>
    </source>
</reference>
<sequence>MQDLSAVKAFHALCQHKSLTAAAKALEQPKSTLSRRLAQLEEDLGQSLLMRQGNRLTLTKAGEVFAVYSEQLLELANKSQEALQELNNQVTGELTLVVHPNLIRGWLSQVLDEFMQQHSTLKIRLLSQFQHSDEVFEPDLIIWIEHAAPMGYRKERLGYWRYAAYASPKYLAHRDKPTHPRELIHHPWIDFIACRRAELELHHPEFGSYSLPALESRLQSDNLAMQADAIAKGRGIGLLPTWFANGFETAHPGSLIPCVNGWQSQPTEINCFYPLGRHPLRLRLFIDALRQARPDEWQ</sequence>
<gene>
    <name type="primary">irgB</name>
    <name type="ordered locus">VC_0474</name>
</gene>
<dbReference type="EMBL" id="AE003852">
    <property type="protein sequence ID" value="AAF93647.1"/>
    <property type="molecule type" value="Genomic_DNA"/>
</dbReference>
<dbReference type="PIR" id="C82317">
    <property type="entry name" value="C82317"/>
</dbReference>
<dbReference type="RefSeq" id="NP_230128.1">
    <property type="nucleotide sequence ID" value="NC_002505.1"/>
</dbReference>
<dbReference type="RefSeq" id="WP_001153529.1">
    <property type="nucleotide sequence ID" value="NZ_LT906614.1"/>
</dbReference>
<dbReference type="SMR" id="P0C6D1"/>
<dbReference type="STRING" id="243277.VC_0474"/>
<dbReference type="DNASU" id="2615136"/>
<dbReference type="EnsemblBacteria" id="AAF93647">
    <property type="protein sequence ID" value="AAF93647"/>
    <property type="gene ID" value="VC_0474"/>
</dbReference>
<dbReference type="KEGG" id="vch:VC_0474"/>
<dbReference type="PATRIC" id="fig|243277.26.peg.448"/>
<dbReference type="eggNOG" id="COG0583">
    <property type="taxonomic scope" value="Bacteria"/>
</dbReference>
<dbReference type="HOGENOM" id="CLU_039613_16_2_6"/>
<dbReference type="Proteomes" id="UP000000584">
    <property type="component" value="Chromosome 1"/>
</dbReference>
<dbReference type="GO" id="GO:0003700">
    <property type="term" value="F:DNA-binding transcription factor activity"/>
    <property type="evidence" value="ECO:0000318"/>
    <property type="project" value="GO_Central"/>
</dbReference>
<dbReference type="GO" id="GO:0043565">
    <property type="term" value="F:sequence-specific DNA binding"/>
    <property type="evidence" value="ECO:0000318"/>
    <property type="project" value="GO_Central"/>
</dbReference>
<dbReference type="GO" id="GO:0006351">
    <property type="term" value="P:DNA-templated transcription"/>
    <property type="evidence" value="ECO:0000318"/>
    <property type="project" value="GO_Central"/>
</dbReference>
<dbReference type="Gene3D" id="3.40.190.290">
    <property type="match status" value="1"/>
</dbReference>
<dbReference type="Gene3D" id="1.10.10.10">
    <property type="entry name" value="Winged helix-like DNA-binding domain superfamily/Winged helix DNA-binding domain"/>
    <property type="match status" value="1"/>
</dbReference>
<dbReference type="InterPro" id="IPR005119">
    <property type="entry name" value="LysR_subst-bd"/>
</dbReference>
<dbReference type="InterPro" id="IPR000847">
    <property type="entry name" value="Tscrpt_reg_HTH_LysR"/>
</dbReference>
<dbReference type="InterPro" id="IPR036388">
    <property type="entry name" value="WH-like_DNA-bd_sf"/>
</dbReference>
<dbReference type="InterPro" id="IPR036390">
    <property type="entry name" value="WH_DNA-bd_sf"/>
</dbReference>
<dbReference type="PANTHER" id="PTHR30537">
    <property type="entry name" value="HTH-TYPE TRANSCRIPTIONAL REGULATOR"/>
    <property type="match status" value="1"/>
</dbReference>
<dbReference type="PANTHER" id="PTHR30537:SF66">
    <property type="entry name" value="IRON-REGULATED VIRULENCE REGULATORY PROTEIN IRGB"/>
    <property type="match status" value="1"/>
</dbReference>
<dbReference type="Pfam" id="PF00126">
    <property type="entry name" value="HTH_1"/>
    <property type="match status" value="1"/>
</dbReference>
<dbReference type="Pfam" id="PF03466">
    <property type="entry name" value="LysR_substrate"/>
    <property type="match status" value="1"/>
</dbReference>
<dbReference type="SUPFAM" id="SSF53850">
    <property type="entry name" value="Periplasmic binding protein-like II"/>
    <property type="match status" value="1"/>
</dbReference>
<dbReference type="SUPFAM" id="SSF46785">
    <property type="entry name" value="Winged helix' DNA-binding domain"/>
    <property type="match status" value="1"/>
</dbReference>
<dbReference type="PROSITE" id="PS50931">
    <property type="entry name" value="HTH_LYSR"/>
    <property type="match status" value="1"/>
</dbReference>
<comment type="function">
    <text evidence="1">Transcription activation of the irgA gene. In the presence of sufficient iron, transcription of both irgA and irgB is negatively regulated by a fur-like protein. In low iron conditions, negative regulation of transcription is removed, and production of irgB leads to positive transcriptional activation of irgA (By similarity).</text>
</comment>
<comment type="similarity">
    <text evidence="3">Belongs to the LysR transcriptional regulatory family.</text>
</comment>
<accession>P0C6D1</accession>
<accession>P25543</accession>
<accession>Q9KUP1</accession>
<name>IRGB_VIBCH</name>
<keyword id="KW-0010">Activator</keyword>
<keyword id="KW-0238">DNA-binding</keyword>
<keyword id="KW-1185">Reference proteome</keyword>
<keyword id="KW-0804">Transcription</keyword>
<keyword id="KW-0805">Transcription regulation</keyword>
<keyword id="KW-0843">Virulence</keyword>
<proteinExistence type="inferred from homology"/>
<feature type="chain" id="PRO_0000105659" description="Iron-regulated virulence regulatory protein IrgB">
    <location>
        <begin position="1"/>
        <end position="298"/>
    </location>
</feature>
<feature type="domain" description="HTH lysR-type" evidence="2">
    <location>
        <begin position="1"/>
        <end position="59"/>
    </location>
</feature>
<feature type="DNA-binding region" description="H-T-H motif" evidence="2">
    <location>
        <begin position="19"/>
        <end position="38"/>
    </location>
</feature>